<gene>
    <name evidence="1" type="primary">carB</name>
    <name type="ordered locus">Teth39_0228</name>
</gene>
<accession>B0KBW4</accession>
<sequence length="1072" mass="119061">MPKYKDINKVLVIGSGPIIIGQAAEFDYSGTQACKSLKEEGVQVVLVNNNPATIMTDTDIADIVYIENPTVSVVEKIIAKERPEGILATLGGQTGLNLAVKLKEEGILDKYNVKLLGTSFESIKTAEDRELFKRKMQEIGEPVAESVTVTNIEDALKFAKNYGYPLIIRPAYTLGGTGGGIAHNDEELISIVDLGLKKSMVGEVLVEKSLYGWKEIEFEVMRDAADNCITICSMENFDPVGVHTGDSIVVAPTQTLSDYEYQMLRSASIKIIKALKIEGGCNIQFALDPKSHKYYVIEVNPRVSRSSALASKATGYPIAKIAAKIAIGLRLDEIKNPVTGKTTAFFEPALDYVVTKIPRWPFDKFYTTDRKIGTQMKATGEVMAIERSFEASLLKAVRSLEIKAYGLRLNNVKAMKTEEILKGISVPNDMRLFYIAEALRRDIDIDYINEVTKIDKWFLNKLLNIVNMEREVEKSELSEGILKKAKRMGFSDREIATIKGIKEEDVRMLRKQHGIYPSYKMVDTCAAEFESVTQYIYSTYGEEDEVEIHDMPKVIVIGSGPIRIGQGIEFDYCSVKALWALREAGIKSIIINNNPETVSTDFDTGDRLYFEPITLEDVLNIYEKEKPLGVMVMFGGQTAINLTEGLVKNRVKILGTSYESIDISEDREKFSKLLRELNINQPKGDYALTVEDAKDIALKLGFPLLIRPSYVIGGQSMEKVNTLQEIIDYVSNATQVSPGRPILIDKYIDGREVEVDAVSDGECVLIPGIMEHIERAGVHSGDSFSIYPARNLSEREINTIIEYTERISKALNVKGLINIQFAVKEGTVYVLEVNPRASRTVPIMSKATGVPMVKLAVEVALGKKLKELGYKSGLWPQTPYTVVKAPVFSMEKLTDAEVSLGPEMKSTGEIMGIDLSYEGALYKALEGAGLKIPKKGKILLSIAERDFQEVPSLVEKLQSLGYEIYATYRTGKYLSLMGIHVNVISLDNAIKLLKDGYFDAVINTPTKGKKPDNTGFKLRRTAVEYRIPLFTSMDTIKAALNAVAKVNVNGLSILSINEYEEIQKDNVKNLVL</sequence>
<evidence type="ECO:0000255" key="1">
    <source>
        <dbReference type="HAMAP-Rule" id="MF_01210"/>
    </source>
</evidence>
<feature type="chain" id="PRO_1000138903" description="Carbamoyl phosphate synthase large chain">
    <location>
        <begin position="1"/>
        <end position="1072"/>
    </location>
</feature>
<feature type="domain" description="ATP-grasp 1" evidence="1">
    <location>
        <begin position="133"/>
        <end position="327"/>
    </location>
</feature>
<feature type="domain" description="ATP-grasp 2" evidence="1">
    <location>
        <begin position="671"/>
        <end position="861"/>
    </location>
</feature>
<feature type="domain" description="MGS-like" evidence="1">
    <location>
        <begin position="930"/>
        <end position="1072"/>
    </location>
</feature>
<feature type="region of interest" description="Carboxyphosphate synthetic domain" evidence="1">
    <location>
        <begin position="1"/>
        <end position="401"/>
    </location>
</feature>
<feature type="region of interest" description="Oligomerization domain" evidence="1">
    <location>
        <begin position="402"/>
        <end position="544"/>
    </location>
</feature>
<feature type="region of interest" description="Carbamoyl phosphate synthetic domain" evidence="1">
    <location>
        <begin position="545"/>
        <end position="929"/>
    </location>
</feature>
<feature type="region of interest" description="Allosteric domain" evidence="1">
    <location>
        <begin position="930"/>
        <end position="1072"/>
    </location>
</feature>
<feature type="binding site" evidence="1">
    <location>
        <position position="129"/>
    </location>
    <ligand>
        <name>ATP</name>
        <dbReference type="ChEBI" id="CHEBI:30616"/>
        <label>1</label>
    </ligand>
</feature>
<feature type="binding site" evidence="1">
    <location>
        <position position="169"/>
    </location>
    <ligand>
        <name>ATP</name>
        <dbReference type="ChEBI" id="CHEBI:30616"/>
        <label>1</label>
    </ligand>
</feature>
<feature type="binding site" evidence="1">
    <location>
        <position position="175"/>
    </location>
    <ligand>
        <name>ATP</name>
        <dbReference type="ChEBI" id="CHEBI:30616"/>
        <label>1</label>
    </ligand>
</feature>
<feature type="binding site" evidence="1">
    <location>
        <position position="176"/>
    </location>
    <ligand>
        <name>ATP</name>
        <dbReference type="ChEBI" id="CHEBI:30616"/>
        <label>1</label>
    </ligand>
</feature>
<feature type="binding site" evidence="1">
    <location>
        <position position="208"/>
    </location>
    <ligand>
        <name>ATP</name>
        <dbReference type="ChEBI" id="CHEBI:30616"/>
        <label>1</label>
    </ligand>
</feature>
<feature type="binding site" evidence="1">
    <location>
        <position position="210"/>
    </location>
    <ligand>
        <name>ATP</name>
        <dbReference type="ChEBI" id="CHEBI:30616"/>
        <label>1</label>
    </ligand>
</feature>
<feature type="binding site" evidence="1">
    <location>
        <position position="215"/>
    </location>
    <ligand>
        <name>ATP</name>
        <dbReference type="ChEBI" id="CHEBI:30616"/>
        <label>1</label>
    </ligand>
</feature>
<feature type="binding site" evidence="1">
    <location>
        <position position="241"/>
    </location>
    <ligand>
        <name>ATP</name>
        <dbReference type="ChEBI" id="CHEBI:30616"/>
        <label>1</label>
    </ligand>
</feature>
<feature type="binding site" evidence="1">
    <location>
        <position position="242"/>
    </location>
    <ligand>
        <name>ATP</name>
        <dbReference type="ChEBI" id="CHEBI:30616"/>
        <label>1</label>
    </ligand>
</feature>
<feature type="binding site" evidence="1">
    <location>
        <position position="243"/>
    </location>
    <ligand>
        <name>ATP</name>
        <dbReference type="ChEBI" id="CHEBI:30616"/>
        <label>1</label>
    </ligand>
</feature>
<feature type="binding site" evidence="1">
    <location>
        <position position="284"/>
    </location>
    <ligand>
        <name>ATP</name>
        <dbReference type="ChEBI" id="CHEBI:30616"/>
        <label>1</label>
    </ligand>
</feature>
<feature type="binding site" evidence="1">
    <location>
        <position position="284"/>
    </location>
    <ligand>
        <name>Mg(2+)</name>
        <dbReference type="ChEBI" id="CHEBI:18420"/>
        <label>1</label>
    </ligand>
</feature>
<feature type="binding site" evidence="1">
    <location>
        <position position="284"/>
    </location>
    <ligand>
        <name>Mn(2+)</name>
        <dbReference type="ChEBI" id="CHEBI:29035"/>
        <label>1</label>
    </ligand>
</feature>
<feature type="binding site" evidence="1">
    <location>
        <position position="298"/>
    </location>
    <ligand>
        <name>ATP</name>
        <dbReference type="ChEBI" id="CHEBI:30616"/>
        <label>1</label>
    </ligand>
</feature>
<feature type="binding site" evidence="1">
    <location>
        <position position="298"/>
    </location>
    <ligand>
        <name>Mg(2+)</name>
        <dbReference type="ChEBI" id="CHEBI:18420"/>
        <label>1</label>
    </ligand>
</feature>
<feature type="binding site" evidence="1">
    <location>
        <position position="298"/>
    </location>
    <ligand>
        <name>Mg(2+)</name>
        <dbReference type="ChEBI" id="CHEBI:18420"/>
        <label>2</label>
    </ligand>
</feature>
<feature type="binding site" evidence="1">
    <location>
        <position position="298"/>
    </location>
    <ligand>
        <name>Mn(2+)</name>
        <dbReference type="ChEBI" id="CHEBI:29035"/>
        <label>1</label>
    </ligand>
</feature>
<feature type="binding site" evidence="1">
    <location>
        <position position="298"/>
    </location>
    <ligand>
        <name>Mn(2+)</name>
        <dbReference type="ChEBI" id="CHEBI:29035"/>
        <label>2</label>
    </ligand>
</feature>
<feature type="binding site" evidence="1">
    <location>
        <position position="300"/>
    </location>
    <ligand>
        <name>Mg(2+)</name>
        <dbReference type="ChEBI" id="CHEBI:18420"/>
        <label>2</label>
    </ligand>
</feature>
<feature type="binding site" evidence="1">
    <location>
        <position position="300"/>
    </location>
    <ligand>
        <name>Mn(2+)</name>
        <dbReference type="ChEBI" id="CHEBI:29035"/>
        <label>2</label>
    </ligand>
</feature>
<feature type="binding site" evidence="1">
    <location>
        <position position="707"/>
    </location>
    <ligand>
        <name>ATP</name>
        <dbReference type="ChEBI" id="CHEBI:30616"/>
        <label>2</label>
    </ligand>
</feature>
<feature type="binding site" evidence="1">
    <location>
        <position position="746"/>
    </location>
    <ligand>
        <name>ATP</name>
        <dbReference type="ChEBI" id="CHEBI:30616"/>
        <label>2</label>
    </ligand>
</feature>
<feature type="binding site" evidence="1">
    <location>
        <position position="748"/>
    </location>
    <ligand>
        <name>ATP</name>
        <dbReference type="ChEBI" id="CHEBI:30616"/>
        <label>2</label>
    </ligand>
</feature>
<feature type="binding site" evidence="1">
    <location>
        <position position="752"/>
    </location>
    <ligand>
        <name>ATP</name>
        <dbReference type="ChEBI" id="CHEBI:30616"/>
        <label>2</label>
    </ligand>
</feature>
<feature type="binding site" evidence="1">
    <location>
        <position position="777"/>
    </location>
    <ligand>
        <name>ATP</name>
        <dbReference type="ChEBI" id="CHEBI:30616"/>
        <label>2</label>
    </ligand>
</feature>
<feature type="binding site" evidence="1">
    <location>
        <position position="778"/>
    </location>
    <ligand>
        <name>ATP</name>
        <dbReference type="ChEBI" id="CHEBI:30616"/>
        <label>2</label>
    </ligand>
</feature>
<feature type="binding site" evidence="1">
    <location>
        <position position="779"/>
    </location>
    <ligand>
        <name>ATP</name>
        <dbReference type="ChEBI" id="CHEBI:30616"/>
        <label>2</label>
    </ligand>
</feature>
<feature type="binding site" evidence="1">
    <location>
        <position position="780"/>
    </location>
    <ligand>
        <name>ATP</name>
        <dbReference type="ChEBI" id="CHEBI:30616"/>
        <label>2</label>
    </ligand>
</feature>
<feature type="binding site" evidence="1">
    <location>
        <position position="820"/>
    </location>
    <ligand>
        <name>ATP</name>
        <dbReference type="ChEBI" id="CHEBI:30616"/>
        <label>2</label>
    </ligand>
</feature>
<feature type="binding site" evidence="1">
    <location>
        <position position="820"/>
    </location>
    <ligand>
        <name>Mg(2+)</name>
        <dbReference type="ChEBI" id="CHEBI:18420"/>
        <label>3</label>
    </ligand>
</feature>
<feature type="binding site" evidence="1">
    <location>
        <position position="820"/>
    </location>
    <ligand>
        <name>Mn(2+)</name>
        <dbReference type="ChEBI" id="CHEBI:29035"/>
        <label>3</label>
    </ligand>
</feature>
<feature type="binding site" evidence="1">
    <location>
        <position position="832"/>
    </location>
    <ligand>
        <name>ATP</name>
        <dbReference type="ChEBI" id="CHEBI:30616"/>
        <label>2</label>
    </ligand>
</feature>
<feature type="binding site" evidence="1">
    <location>
        <position position="832"/>
    </location>
    <ligand>
        <name>Mg(2+)</name>
        <dbReference type="ChEBI" id="CHEBI:18420"/>
        <label>3</label>
    </ligand>
</feature>
<feature type="binding site" evidence="1">
    <location>
        <position position="832"/>
    </location>
    <ligand>
        <name>Mg(2+)</name>
        <dbReference type="ChEBI" id="CHEBI:18420"/>
        <label>4</label>
    </ligand>
</feature>
<feature type="binding site" evidence="1">
    <location>
        <position position="832"/>
    </location>
    <ligand>
        <name>Mn(2+)</name>
        <dbReference type="ChEBI" id="CHEBI:29035"/>
        <label>3</label>
    </ligand>
</feature>
<feature type="binding site" evidence="1">
    <location>
        <position position="832"/>
    </location>
    <ligand>
        <name>Mn(2+)</name>
        <dbReference type="ChEBI" id="CHEBI:29035"/>
        <label>4</label>
    </ligand>
</feature>
<feature type="binding site" evidence="1">
    <location>
        <position position="834"/>
    </location>
    <ligand>
        <name>Mg(2+)</name>
        <dbReference type="ChEBI" id="CHEBI:18420"/>
        <label>4</label>
    </ligand>
</feature>
<feature type="binding site" evidence="1">
    <location>
        <position position="834"/>
    </location>
    <ligand>
        <name>Mn(2+)</name>
        <dbReference type="ChEBI" id="CHEBI:29035"/>
        <label>4</label>
    </ligand>
</feature>
<dbReference type="EC" id="6.3.4.16" evidence="1"/>
<dbReference type="EC" id="6.3.5.5" evidence="1"/>
<dbReference type="EMBL" id="CP000924">
    <property type="protein sequence ID" value="ABY93900.1"/>
    <property type="molecule type" value="Genomic_DNA"/>
</dbReference>
<dbReference type="RefSeq" id="WP_012268935.1">
    <property type="nucleotide sequence ID" value="NC_010321.1"/>
</dbReference>
<dbReference type="SMR" id="B0KBW4"/>
<dbReference type="STRING" id="340099.Teth39_0228"/>
<dbReference type="KEGG" id="tpd:Teth39_0228"/>
<dbReference type="eggNOG" id="COG0458">
    <property type="taxonomic scope" value="Bacteria"/>
</dbReference>
<dbReference type="HOGENOM" id="CLU_000513_1_0_9"/>
<dbReference type="UniPathway" id="UPA00068">
    <property type="reaction ID" value="UER00171"/>
</dbReference>
<dbReference type="UniPathway" id="UPA00070">
    <property type="reaction ID" value="UER00115"/>
</dbReference>
<dbReference type="Proteomes" id="UP000002156">
    <property type="component" value="Chromosome"/>
</dbReference>
<dbReference type="GO" id="GO:0005737">
    <property type="term" value="C:cytoplasm"/>
    <property type="evidence" value="ECO:0007669"/>
    <property type="project" value="TreeGrafter"/>
</dbReference>
<dbReference type="GO" id="GO:0005524">
    <property type="term" value="F:ATP binding"/>
    <property type="evidence" value="ECO:0007669"/>
    <property type="project" value="UniProtKB-UniRule"/>
</dbReference>
<dbReference type="GO" id="GO:0004087">
    <property type="term" value="F:carbamoyl-phosphate synthase (ammonia) activity"/>
    <property type="evidence" value="ECO:0007669"/>
    <property type="project" value="RHEA"/>
</dbReference>
<dbReference type="GO" id="GO:0004088">
    <property type="term" value="F:carbamoyl-phosphate synthase (glutamine-hydrolyzing) activity"/>
    <property type="evidence" value="ECO:0007669"/>
    <property type="project" value="UniProtKB-UniRule"/>
</dbReference>
<dbReference type="GO" id="GO:0046872">
    <property type="term" value="F:metal ion binding"/>
    <property type="evidence" value="ECO:0007669"/>
    <property type="project" value="UniProtKB-KW"/>
</dbReference>
<dbReference type="GO" id="GO:0044205">
    <property type="term" value="P:'de novo' UMP biosynthetic process"/>
    <property type="evidence" value="ECO:0007669"/>
    <property type="project" value="UniProtKB-UniRule"/>
</dbReference>
<dbReference type="GO" id="GO:0006541">
    <property type="term" value="P:glutamine metabolic process"/>
    <property type="evidence" value="ECO:0007669"/>
    <property type="project" value="TreeGrafter"/>
</dbReference>
<dbReference type="GO" id="GO:0006526">
    <property type="term" value="P:L-arginine biosynthetic process"/>
    <property type="evidence" value="ECO:0007669"/>
    <property type="project" value="UniProtKB-UniRule"/>
</dbReference>
<dbReference type="CDD" id="cd01424">
    <property type="entry name" value="MGS_CPS_II"/>
    <property type="match status" value="1"/>
</dbReference>
<dbReference type="FunFam" id="1.10.1030.10:FF:000002">
    <property type="entry name" value="Carbamoyl-phosphate synthase large chain"/>
    <property type="match status" value="1"/>
</dbReference>
<dbReference type="FunFam" id="3.30.470.20:FF:000001">
    <property type="entry name" value="Carbamoyl-phosphate synthase large chain"/>
    <property type="match status" value="1"/>
</dbReference>
<dbReference type="FunFam" id="3.30.470.20:FF:000026">
    <property type="entry name" value="Carbamoyl-phosphate synthase large chain"/>
    <property type="match status" value="1"/>
</dbReference>
<dbReference type="FunFam" id="3.40.50.20:FF:000001">
    <property type="entry name" value="Carbamoyl-phosphate synthase large chain"/>
    <property type="match status" value="1"/>
</dbReference>
<dbReference type="FunFam" id="3.40.50.20:FF:000002">
    <property type="entry name" value="Carbamoyl-phosphate synthase large chain"/>
    <property type="match status" value="1"/>
</dbReference>
<dbReference type="Gene3D" id="3.40.50.20">
    <property type="match status" value="2"/>
</dbReference>
<dbReference type="Gene3D" id="3.30.1490.20">
    <property type="entry name" value="ATP-grasp fold, A domain"/>
    <property type="match status" value="1"/>
</dbReference>
<dbReference type="Gene3D" id="3.30.470.20">
    <property type="entry name" value="ATP-grasp fold, B domain"/>
    <property type="match status" value="2"/>
</dbReference>
<dbReference type="Gene3D" id="1.10.1030.10">
    <property type="entry name" value="Carbamoyl-phosphate synthetase, large subunit oligomerisation domain"/>
    <property type="match status" value="1"/>
</dbReference>
<dbReference type="Gene3D" id="3.40.50.1380">
    <property type="entry name" value="Methylglyoxal synthase-like domain"/>
    <property type="match status" value="1"/>
</dbReference>
<dbReference type="HAMAP" id="MF_01210_A">
    <property type="entry name" value="CPSase_L_chain_A"/>
    <property type="match status" value="1"/>
</dbReference>
<dbReference type="HAMAP" id="MF_01210_B">
    <property type="entry name" value="CPSase_L_chain_B"/>
    <property type="match status" value="1"/>
</dbReference>
<dbReference type="InterPro" id="IPR011761">
    <property type="entry name" value="ATP-grasp"/>
</dbReference>
<dbReference type="InterPro" id="IPR013815">
    <property type="entry name" value="ATP_grasp_subdomain_1"/>
</dbReference>
<dbReference type="InterPro" id="IPR006275">
    <property type="entry name" value="CarbamoylP_synth_lsu"/>
</dbReference>
<dbReference type="InterPro" id="IPR005480">
    <property type="entry name" value="CarbamoylP_synth_lsu_oligo"/>
</dbReference>
<dbReference type="InterPro" id="IPR036897">
    <property type="entry name" value="CarbamoylP_synth_lsu_oligo_sf"/>
</dbReference>
<dbReference type="InterPro" id="IPR005479">
    <property type="entry name" value="CbamoylP_synth_lsu-like_ATP-bd"/>
</dbReference>
<dbReference type="InterPro" id="IPR005483">
    <property type="entry name" value="CbamoylP_synth_lsu_CPSase_dom"/>
</dbReference>
<dbReference type="InterPro" id="IPR011607">
    <property type="entry name" value="MGS-like_dom"/>
</dbReference>
<dbReference type="InterPro" id="IPR036914">
    <property type="entry name" value="MGS-like_dom_sf"/>
</dbReference>
<dbReference type="InterPro" id="IPR033937">
    <property type="entry name" value="MGS_CPS_CarB"/>
</dbReference>
<dbReference type="InterPro" id="IPR016185">
    <property type="entry name" value="PreATP-grasp_dom_sf"/>
</dbReference>
<dbReference type="NCBIfam" id="TIGR01369">
    <property type="entry name" value="CPSaseII_lrg"/>
    <property type="match status" value="1"/>
</dbReference>
<dbReference type="NCBIfam" id="NF003671">
    <property type="entry name" value="PRK05294.1"/>
    <property type="match status" value="1"/>
</dbReference>
<dbReference type="NCBIfam" id="NF009455">
    <property type="entry name" value="PRK12815.1"/>
    <property type="match status" value="1"/>
</dbReference>
<dbReference type="PANTHER" id="PTHR11405:SF53">
    <property type="entry name" value="CARBAMOYL-PHOSPHATE SYNTHASE [AMMONIA], MITOCHONDRIAL"/>
    <property type="match status" value="1"/>
</dbReference>
<dbReference type="PANTHER" id="PTHR11405">
    <property type="entry name" value="CARBAMOYLTRANSFERASE FAMILY MEMBER"/>
    <property type="match status" value="1"/>
</dbReference>
<dbReference type="Pfam" id="PF02786">
    <property type="entry name" value="CPSase_L_D2"/>
    <property type="match status" value="2"/>
</dbReference>
<dbReference type="Pfam" id="PF02787">
    <property type="entry name" value="CPSase_L_D3"/>
    <property type="match status" value="1"/>
</dbReference>
<dbReference type="Pfam" id="PF02142">
    <property type="entry name" value="MGS"/>
    <property type="match status" value="1"/>
</dbReference>
<dbReference type="PRINTS" id="PR00098">
    <property type="entry name" value="CPSASE"/>
</dbReference>
<dbReference type="SMART" id="SM01096">
    <property type="entry name" value="CPSase_L_D3"/>
    <property type="match status" value="1"/>
</dbReference>
<dbReference type="SMART" id="SM00851">
    <property type="entry name" value="MGS"/>
    <property type="match status" value="1"/>
</dbReference>
<dbReference type="SUPFAM" id="SSF48108">
    <property type="entry name" value="Carbamoyl phosphate synthetase, large subunit connection domain"/>
    <property type="match status" value="1"/>
</dbReference>
<dbReference type="SUPFAM" id="SSF56059">
    <property type="entry name" value="Glutathione synthetase ATP-binding domain-like"/>
    <property type="match status" value="2"/>
</dbReference>
<dbReference type="SUPFAM" id="SSF52335">
    <property type="entry name" value="Methylglyoxal synthase-like"/>
    <property type="match status" value="1"/>
</dbReference>
<dbReference type="SUPFAM" id="SSF52440">
    <property type="entry name" value="PreATP-grasp domain"/>
    <property type="match status" value="2"/>
</dbReference>
<dbReference type="PROSITE" id="PS50975">
    <property type="entry name" value="ATP_GRASP"/>
    <property type="match status" value="2"/>
</dbReference>
<dbReference type="PROSITE" id="PS00866">
    <property type="entry name" value="CPSASE_1"/>
    <property type="match status" value="1"/>
</dbReference>
<dbReference type="PROSITE" id="PS00867">
    <property type="entry name" value="CPSASE_2"/>
    <property type="match status" value="2"/>
</dbReference>
<dbReference type="PROSITE" id="PS51855">
    <property type="entry name" value="MGS"/>
    <property type="match status" value="1"/>
</dbReference>
<reference key="1">
    <citation type="submission" date="2008-01" db="EMBL/GenBank/DDBJ databases">
        <title>Complete sequence of Thermoanaerobacter pseudethanolicus 39E.</title>
        <authorList>
            <person name="Copeland A."/>
            <person name="Lucas S."/>
            <person name="Lapidus A."/>
            <person name="Barry K."/>
            <person name="Glavina del Rio T."/>
            <person name="Dalin E."/>
            <person name="Tice H."/>
            <person name="Pitluck S."/>
            <person name="Bruce D."/>
            <person name="Goodwin L."/>
            <person name="Saunders E."/>
            <person name="Brettin T."/>
            <person name="Detter J.C."/>
            <person name="Han C."/>
            <person name="Schmutz J."/>
            <person name="Larimer F."/>
            <person name="Land M."/>
            <person name="Hauser L."/>
            <person name="Kyrpides N."/>
            <person name="Lykidis A."/>
            <person name="Hemme C."/>
            <person name="Fields M.W."/>
            <person name="He Z."/>
            <person name="Zhou J."/>
            <person name="Richardson P."/>
        </authorList>
    </citation>
    <scope>NUCLEOTIDE SEQUENCE [LARGE SCALE GENOMIC DNA]</scope>
    <source>
        <strain>ATCC 33223 / DSM 2355 / 39E</strain>
    </source>
</reference>
<keyword id="KW-0028">Amino-acid biosynthesis</keyword>
<keyword id="KW-0055">Arginine biosynthesis</keyword>
<keyword id="KW-0067">ATP-binding</keyword>
<keyword id="KW-0436">Ligase</keyword>
<keyword id="KW-0460">Magnesium</keyword>
<keyword id="KW-0464">Manganese</keyword>
<keyword id="KW-0479">Metal-binding</keyword>
<keyword id="KW-0547">Nucleotide-binding</keyword>
<keyword id="KW-0665">Pyrimidine biosynthesis</keyword>
<keyword id="KW-1185">Reference proteome</keyword>
<keyword id="KW-0677">Repeat</keyword>
<proteinExistence type="inferred from homology"/>
<comment type="function">
    <text evidence="1">Large subunit of the glutamine-dependent carbamoyl phosphate synthetase (CPSase). CPSase catalyzes the formation of carbamoyl phosphate from the ammonia moiety of glutamine, carbonate, and phosphate donated by ATP, constituting the first step of 2 biosynthetic pathways, one leading to arginine and/or urea and the other to pyrimidine nucleotides. The large subunit (synthetase) binds the substrates ammonia (free or transferred from glutamine from the small subunit), hydrogencarbonate and ATP and carries out an ATP-coupled ligase reaction, activating hydrogencarbonate by forming carboxy phosphate which reacts with ammonia to form carbamoyl phosphate.</text>
</comment>
<comment type="catalytic activity">
    <reaction evidence="1">
        <text>hydrogencarbonate + L-glutamine + 2 ATP + H2O = carbamoyl phosphate + L-glutamate + 2 ADP + phosphate + 2 H(+)</text>
        <dbReference type="Rhea" id="RHEA:18633"/>
        <dbReference type="ChEBI" id="CHEBI:15377"/>
        <dbReference type="ChEBI" id="CHEBI:15378"/>
        <dbReference type="ChEBI" id="CHEBI:17544"/>
        <dbReference type="ChEBI" id="CHEBI:29985"/>
        <dbReference type="ChEBI" id="CHEBI:30616"/>
        <dbReference type="ChEBI" id="CHEBI:43474"/>
        <dbReference type="ChEBI" id="CHEBI:58228"/>
        <dbReference type="ChEBI" id="CHEBI:58359"/>
        <dbReference type="ChEBI" id="CHEBI:456216"/>
        <dbReference type="EC" id="6.3.5.5"/>
    </reaction>
</comment>
<comment type="catalytic activity">
    <molecule>Carbamoyl phosphate synthase large chain</molecule>
    <reaction evidence="1">
        <text>hydrogencarbonate + NH4(+) + 2 ATP = carbamoyl phosphate + 2 ADP + phosphate + 2 H(+)</text>
        <dbReference type="Rhea" id="RHEA:18029"/>
        <dbReference type="ChEBI" id="CHEBI:15378"/>
        <dbReference type="ChEBI" id="CHEBI:17544"/>
        <dbReference type="ChEBI" id="CHEBI:28938"/>
        <dbReference type="ChEBI" id="CHEBI:30616"/>
        <dbReference type="ChEBI" id="CHEBI:43474"/>
        <dbReference type="ChEBI" id="CHEBI:58228"/>
        <dbReference type="ChEBI" id="CHEBI:456216"/>
        <dbReference type="EC" id="6.3.4.16"/>
    </reaction>
</comment>
<comment type="cofactor">
    <cofactor evidence="1">
        <name>Mg(2+)</name>
        <dbReference type="ChEBI" id="CHEBI:18420"/>
    </cofactor>
    <cofactor evidence="1">
        <name>Mn(2+)</name>
        <dbReference type="ChEBI" id="CHEBI:29035"/>
    </cofactor>
    <text evidence="1">Binds 4 Mg(2+) or Mn(2+) ions per subunit.</text>
</comment>
<comment type="pathway">
    <text evidence="1">Amino-acid biosynthesis; L-arginine biosynthesis; carbamoyl phosphate from bicarbonate: step 1/1.</text>
</comment>
<comment type="pathway">
    <text evidence="1">Pyrimidine metabolism; UMP biosynthesis via de novo pathway; (S)-dihydroorotate from bicarbonate: step 1/3.</text>
</comment>
<comment type="subunit">
    <text evidence="1">Composed of two chains; the small (or glutamine) chain promotes the hydrolysis of glutamine to ammonia, which is used by the large (or ammonia) chain to synthesize carbamoyl phosphate. Tetramer of heterodimers (alpha,beta)4.</text>
</comment>
<comment type="domain">
    <text evidence="1">The large subunit is composed of 2 ATP-grasp domains that are involved in binding the 2 ATP molecules needed for carbamoyl phosphate synthesis. The N-terminal ATP-grasp domain (referred to as the carboxyphosphate synthetic component) catalyzes the ATP-dependent phosphorylation of hydrogencarbonate to carboxyphosphate and the subsequent nucleophilic attack by ammonia to form a carbamate intermediate. The C-terminal ATP-grasp domain (referred to as the carbamoyl phosphate synthetic component) then catalyzes the phosphorylation of carbamate with the second ATP to form the end product carbamoyl phosphate. The reactive and unstable enzyme intermediates are sequentially channeled from one active site to the next through the interior of the protein over a distance of at least 96 A.</text>
</comment>
<comment type="similarity">
    <text evidence="1">Belongs to the CarB family.</text>
</comment>
<protein>
    <recommendedName>
        <fullName evidence="1">Carbamoyl phosphate synthase large chain</fullName>
        <ecNumber evidence="1">6.3.4.16</ecNumber>
        <ecNumber evidence="1">6.3.5.5</ecNumber>
    </recommendedName>
    <alternativeName>
        <fullName evidence="1">Carbamoyl phosphate synthetase ammonia chain</fullName>
    </alternativeName>
</protein>
<organism>
    <name type="scientific">Thermoanaerobacter pseudethanolicus (strain ATCC 33223 / 39E)</name>
    <name type="common">Clostridium thermohydrosulfuricum</name>
    <dbReference type="NCBI Taxonomy" id="340099"/>
    <lineage>
        <taxon>Bacteria</taxon>
        <taxon>Bacillati</taxon>
        <taxon>Bacillota</taxon>
        <taxon>Clostridia</taxon>
        <taxon>Thermoanaerobacterales</taxon>
        <taxon>Thermoanaerobacteraceae</taxon>
        <taxon>Thermoanaerobacter</taxon>
    </lineage>
</organism>
<name>CARB_THEP3</name>